<comment type="function">
    <text evidence="1">Catalyzes the dephosphorylation of heptose(II) of the outer membrane lipopolysaccharide core.</text>
</comment>
<comment type="pathway">
    <text evidence="1">Bacterial outer membrane biogenesis; lipopolysaccharide metabolism.</text>
</comment>
<comment type="subcellular location">
    <subcellularLocation>
        <location evidence="1">Periplasm</location>
    </subcellularLocation>
</comment>
<comment type="similarity">
    <text evidence="1">Belongs to the phosphoglycerate mutase family. Ais subfamily.</text>
</comment>
<organism>
    <name type="scientific">Escherichia coli (strain SE11)</name>
    <dbReference type="NCBI Taxonomy" id="409438"/>
    <lineage>
        <taxon>Bacteria</taxon>
        <taxon>Pseudomonadati</taxon>
        <taxon>Pseudomonadota</taxon>
        <taxon>Gammaproteobacteria</taxon>
        <taxon>Enterobacterales</taxon>
        <taxon>Enterobacteriaceae</taxon>
        <taxon>Escherichia</taxon>
    </lineage>
</organism>
<sequence length="200" mass="22290">MLAFCRSSLKSKKYFIILLALAAIAGLGTHAAWSSNGLPRIDNKTLARLAQQHPVVVLFRHAERCDRSTNQCLSDKTGITVKGTQDARELGNAFSADIPDFDLYSSNTVRTIQSATWFSAGKKLTVDKRLLQCGNEIYSAIKDLQSKAPDKNIVIFTHNHCLTYIAKNKRDATFKPDYLDGLVMHVEKGKVYLDGEFVNH</sequence>
<proteinExistence type="inferred from homology"/>
<name>AIS_ECOSE</name>
<dbReference type="EC" id="3.1.3.-" evidence="1"/>
<dbReference type="EMBL" id="AP009240">
    <property type="protein sequence ID" value="BAG78035.1"/>
    <property type="molecule type" value="Genomic_DNA"/>
</dbReference>
<dbReference type="RefSeq" id="WP_001297077.1">
    <property type="nucleotide sequence ID" value="NC_011415.1"/>
</dbReference>
<dbReference type="SMR" id="B6I7J5"/>
<dbReference type="GeneID" id="93774922"/>
<dbReference type="KEGG" id="ecy:ECSE_2511"/>
<dbReference type="HOGENOM" id="CLU_106705_1_0_6"/>
<dbReference type="UniPathway" id="UPA00451"/>
<dbReference type="Proteomes" id="UP000008199">
    <property type="component" value="Chromosome"/>
</dbReference>
<dbReference type="GO" id="GO:0042597">
    <property type="term" value="C:periplasmic space"/>
    <property type="evidence" value="ECO:0007669"/>
    <property type="project" value="UniProtKB-SubCell"/>
</dbReference>
<dbReference type="GO" id="GO:0016791">
    <property type="term" value="F:phosphatase activity"/>
    <property type="evidence" value="ECO:0007669"/>
    <property type="project" value="UniProtKB-UniRule"/>
</dbReference>
<dbReference type="GO" id="GO:0008653">
    <property type="term" value="P:lipopolysaccharide metabolic process"/>
    <property type="evidence" value="ECO:0007669"/>
    <property type="project" value="UniProtKB-UniRule"/>
</dbReference>
<dbReference type="CDD" id="cd07040">
    <property type="entry name" value="HP"/>
    <property type="match status" value="1"/>
</dbReference>
<dbReference type="Gene3D" id="3.40.50.1240">
    <property type="entry name" value="Phosphoglycerate mutase-like"/>
    <property type="match status" value="1"/>
</dbReference>
<dbReference type="HAMAP" id="MF_01868">
    <property type="entry name" value="Ais"/>
    <property type="match status" value="1"/>
</dbReference>
<dbReference type="InterPro" id="IPR013078">
    <property type="entry name" value="His_Pase_superF_clade-1"/>
</dbReference>
<dbReference type="InterPro" id="IPR029033">
    <property type="entry name" value="His_PPase_superfam"/>
</dbReference>
<dbReference type="InterPro" id="IPR011310">
    <property type="entry name" value="LipoPS_heptP_Pase"/>
</dbReference>
<dbReference type="NCBIfam" id="NF011945">
    <property type="entry name" value="PRK15416.1"/>
    <property type="match status" value="1"/>
</dbReference>
<dbReference type="Pfam" id="PF00300">
    <property type="entry name" value="His_Phos_1"/>
    <property type="match status" value="1"/>
</dbReference>
<dbReference type="PIRSF" id="PIRSF011416">
    <property type="entry name" value="Ais-TraG-AfrS"/>
    <property type="match status" value="1"/>
</dbReference>
<dbReference type="SUPFAM" id="SSF53254">
    <property type="entry name" value="Phosphoglycerate mutase-like"/>
    <property type="match status" value="1"/>
</dbReference>
<accession>B6I7J5</accession>
<feature type="signal peptide" evidence="1">
    <location>
        <begin position="1"/>
        <end position="25"/>
    </location>
</feature>
<feature type="chain" id="PRO_0000380557" description="Lipopolysaccharide core heptose(II)-phosphate phosphatase">
    <location>
        <begin position="26"/>
        <end position="200"/>
    </location>
</feature>
<keyword id="KW-0378">Hydrolase</keyword>
<keyword id="KW-0574">Periplasm</keyword>
<keyword id="KW-0732">Signal</keyword>
<protein>
    <recommendedName>
        <fullName evidence="1">Lipopolysaccharide core heptose(II)-phosphate phosphatase</fullName>
        <ecNumber evidence="1">3.1.3.-</ecNumber>
    </recommendedName>
</protein>
<gene>
    <name evidence="1" type="primary">ais</name>
    <name type="ordered locus">ECSE_2511</name>
</gene>
<evidence type="ECO:0000255" key="1">
    <source>
        <dbReference type="HAMAP-Rule" id="MF_01868"/>
    </source>
</evidence>
<reference key="1">
    <citation type="journal article" date="2008" name="DNA Res.">
        <title>Complete genome sequence and comparative analysis of the wild-type commensal Escherichia coli strain SE11 isolated from a healthy adult.</title>
        <authorList>
            <person name="Oshima K."/>
            <person name="Toh H."/>
            <person name="Ogura Y."/>
            <person name="Sasamoto H."/>
            <person name="Morita H."/>
            <person name="Park S.-H."/>
            <person name="Ooka T."/>
            <person name="Iyoda S."/>
            <person name="Taylor T.D."/>
            <person name="Hayashi T."/>
            <person name="Itoh K."/>
            <person name="Hattori M."/>
        </authorList>
    </citation>
    <scope>NUCLEOTIDE SEQUENCE [LARGE SCALE GENOMIC DNA]</scope>
    <source>
        <strain>SE11</strain>
    </source>
</reference>